<name>CYB_ZEUFA</name>
<sequence>MASLRKTHPLLKIVNDALIDLPAPANISVWWNFGSLLGLCLLTQILTGLFLAMHYTSDIATAFSSVAHICRDVNYGWLIRNFHANGASFFFICLYLHIGRGLYYGSYLYKETWNVGVVLFLLVMMTAFVGYVLPWGQMSFWGATVITNLLSAVPYVGDILVQWIWGGFSVDNATLTRFFAFHFLFPFIIAAMTILHFLFLHETGSNNPAGLNSDADKVSFHPYFSYKDLLGFVVMLLALSTLSLFSPNLLGDPDNFIPANPLVTPPHIKPEWYFLFAYAILRSIPNKLGGVLALLSSILILMLVPILHTSKQRGLTFRPLTQILFWVLVADVAILTWIGGMPVEHPFIIVGQVASVLYFALFLVIMPTTGWMENKALKWN</sequence>
<accession>Q94SK8</accession>
<geneLocation type="mitochondrion"/>
<keyword id="KW-0249">Electron transport</keyword>
<keyword id="KW-0349">Heme</keyword>
<keyword id="KW-0408">Iron</keyword>
<keyword id="KW-0472">Membrane</keyword>
<keyword id="KW-0479">Metal-binding</keyword>
<keyword id="KW-0496">Mitochondrion</keyword>
<keyword id="KW-0999">Mitochondrion inner membrane</keyword>
<keyword id="KW-0679">Respiratory chain</keyword>
<keyword id="KW-0812">Transmembrane</keyword>
<keyword id="KW-1133">Transmembrane helix</keyword>
<keyword id="KW-0813">Transport</keyword>
<keyword id="KW-0830">Ubiquinone</keyword>
<protein>
    <recommendedName>
        <fullName>Cytochrome b</fullName>
    </recommendedName>
    <alternativeName>
        <fullName>Complex III subunit 3</fullName>
    </alternativeName>
    <alternativeName>
        <fullName>Complex III subunit III</fullName>
    </alternativeName>
    <alternativeName>
        <fullName>Cytochrome b-c1 complex subunit 3</fullName>
    </alternativeName>
    <alternativeName>
        <fullName>Ubiquinol-cytochrome-c reductase complex cytochrome b subunit</fullName>
    </alternativeName>
</protein>
<reference key="1">
    <citation type="journal article" date="2001" name="Mol. Biol. Evol.">
        <title>Mitogenomic exploration of higher teleostean phylogenies: a case study for moderate-scale evolutionary genomics with 38 newly determined complete mitochondrial DNA sequences.</title>
        <authorList>
            <person name="Miya M."/>
            <person name="Kawaguchi A."/>
            <person name="Nishida M."/>
        </authorList>
    </citation>
    <scope>NUCLEOTIDE SEQUENCE [GENOMIC DNA]</scope>
</reference>
<proteinExistence type="inferred from homology"/>
<feature type="chain" id="PRO_0000061730" description="Cytochrome b">
    <location>
        <begin position="1"/>
        <end position="380"/>
    </location>
</feature>
<feature type="transmembrane region" description="Helical" evidence="2">
    <location>
        <begin position="33"/>
        <end position="53"/>
    </location>
</feature>
<feature type="transmembrane region" description="Helical" evidence="2">
    <location>
        <begin position="77"/>
        <end position="98"/>
    </location>
</feature>
<feature type="transmembrane region" description="Helical" evidence="2">
    <location>
        <begin position="113"/>
        <end position="133"/>
    </location>
</feature>
<feature type="transmembrane region" description="Helical" evidence="2">
    <location>
        <begin position="178"/>
        <end position="198"/>
    </location>
</feature>
<feature type="transmembrane region" description="Helical" evidence="2">
    <location>
        <begin position="226"/>
        <end position="246"/>
    </location>
</feature>
<feature type="transmembrane region" description="Helical" evidence="2">
    <location>
        <begin position="288"/>
        <end position="308"/>
    </location>
</feature>
<feature type="transmembrane region" description="Helical" evidence="2">
    <location>
        <begin position="320"/>
        <end position="340"/>
    </location>
</feature>
<feature type="transmembrane region" description="Helical" evidence="2">
    <location>
        <begin position="347"/>
        <end position="367"/>
    </location>
</feature>
<feature type="binding site" description="axial binding residue" evidence="2">
    <location>
        <position position="83"/>
    </location>
    <ligand>
        <name>heme b</name>
        <dbReference type="ChEBI" id="CHEBI:60344"/>
        <label>b562</label>
    </ligand>
    <ligandPart>
        <name>Fe</name>
        <dbReference type="ChEBI" id="CHEBI:18248"/>
    </ligandPart>
</feature>
<feature type="binding site" description="axial binding residue" evidence="2">
    <location>
        <position position="97"/>
    </location>
    <ligand>
        <name>heme b</name>
        <dbReference type="ChEBI" id="CHEBI:60344"/>
        <label>b566</label>
    </ligand>
    <ligandPart>
        <name>Fe</name>
        <dbReference type="ChEBI" id="CHEBI:18248"/>
    </ligandPart>
</feature>
<feature type="binding site" description="axial binding residue" evidence="2">
    <location>
        <position position="182"/>
    </location>
    <ligand>
        <name>heme b</name>
        <dbReference type="ChEBI" id="CHEBI:60344"/>
        <label>b562</label>
    </ligand>
    <ligandPart>
        <name>Fe</name>
        <dbReference type="ChEBI" id="CHEBI:18248"/>
    </ligandPart>
</feature>
<feature type="binding site" description="axial binding residue" evidence="2">
    <location>
        <position position="196"/>
    </location>
    <ligand>
        <name>heme b</name>
        <dbReference type="ChEBI" id="CHEBI:60344"/>
        <label>b566</label>
    </ligand>
    <ligandPart>
        <name>Fe</name>
        <dbReference type="ChEBI" id="CHEBI:18248"/>
    </ligandPart>
</feature>
<feature type="binding site" evidence="2">
    <location>
        <position position="201"/>
    </location>
    <ligand>
        <name>a ubiquinone</name>
        <dbReference type="ChEBI" id="CHEBI:16389"/>
    </ligand>
</feature>
<comment type="function">
    <text evidence="2">Component of the ubiquinol-cytochrome c reductase complex (complex III or cytochrome b-c1 complex) that is part of the mitochondrial respiratory chain. The b-c1 complex mediates electron transfer from ubiquinol to cytochrome c. Contributes to the generation of a proton gradient across the mitochondrial membrane that is then used for ATP synthesis.</text>
</comment>
<comment type="cofactor">
    <cofactor evidence="2">
        <name>heme b</name>
        <dbReference type="ChEBI" id="CHEBI:60344"/>
    </cofactor>
    <text evidence="2">Binds 2 heme b groups non-covalently.</text>
</comment>
<comment type="subunit">
    <text evidence="2">The cytochrome bc1 complex contains 3 respiratory subunits (MT-CYB, CYC1 and UQCRFS1), 2 core proteins (UQCRC1 and UQCRC2) and probably 6 low-molecular weight proteins.</text>
</comment>
<comment type="subcellular location">
    <subcellularLocation>
        <location evidence="2">Mitochondrion inner membrane</location>
        <topology evidence="2">Multi-pass membrane protein</topology>
    </subcellularLocation>
</comment>
<comment type="miscellaneous">
    <text evidence="1">Heme 1 (or BL or b562) is low-potential and absorbs at about 562 nm, and heme 2 (or BH or b566) is high-potential and absorbs at about 566 nm.</text>
</comment>
<comment type="similarity">
    <text evidence="3 4">Belongs to the cytochrome b family.</text>
</comment>
<comment type="caution">
    <text evidence="2">The full-length protein contains only eight transmembrane helices, not nine as predicted by bioinformatics tools.</text>
</comment>
<organism>
    <name type="scientific">Zeus faber</name>
    <name type="common">John Dory</name>
    <dbReference type="NCBI Taxonomy" id="64108"/>
    <lineage>
        <taxon>Eukaryota</taxon>
        <taxon>Metazoa</taxon>
        <taxon>Chordata</taxon>
        <taxon>Craniata</taxon>
        <taxon>Vertebrata</taxon>
        <taxon>Euteleostomi</taxon>
        <taxon>Actinopterygii</taxon>
        <taxon>Neopterygii</taxon>
        <taxon>Teleostei</taxon>
        <taxon>Neoteleostei</taxon>
        <taxon>Acanthomorphata</taxon>
        <taxon>Zeiogadaria</taxon>
        <taxon>Zeariae</taxon>
        <taxon>Zeiformes</taxon>
        <taxon>Zeidae</taxon>
        <taxon>Zeus</taxon>
    </lineage>
</organism>
<gene>
    <name type="primary">mt-cyb</name>
    <name type="synonym">cob</name>
    <name type="synonym">cytb</name>
    <name type="synonym">mtcyb</name>
</gene>
<dbReference type="EMBL" id="AP002941">
    <property type="protein sequence ID" value="BAB70325.1"/>
    <property type="molecule type" value="Genomic_DNA"/>
</dbReference>
<dbReference type="RefSeq" id="NP_443631.1">
    <property type="nucleotide sequence ID" value="NC_003190.1"/>
</dbReference>
<dbReference type="SMR" id="Q94SK8"/>
<dbReference type="GeneID" id="803971"/>
<dbReference type="CTD" id="4519"/>
<dbReference type="GO" id="GO:0005743">
    <property type="term" value="C:mitochondrial inner membrane"/>
    <property type="evidence" value="ECO:0007669"/>
    <property type="project" value="UniProtKB-SubCell"/>
</dbReference>
<dbReference type="GO" id="GO:0045275">
    <property type="term" value="C:respiratory chain complex III"/>
    <property type="evidence" value="ECO:0007669"/>
    <property type="project" value="InterPro"/>
</dbReference>
<dbReference type="GO" id="GO:0046872">
    <property type="term" value="F:metal ion binding"/>
    <property type="evidence" value="ECO:0007669"/>
    <property type="project" value="UniProtKB-KW"/>
</dbReference>
<dbReference type="GO" id="GO:0008121">
    <property type="term" value="F:ubiquinol-cytochrome-c reductase activity"/>
    <property type="evidence" value="ECO:0007669"/>
    <property type="project" value="InterPro"/>
</dbReference>
<dbReference type="GO" id="GO:0006122">
    <property type="term" value="P:mitochondrial electron transport, ubiquinol to cytochrome c"/>
    <property type="evidence" value="ECO:0007669"/>
    <property type="project" value="TreeGrafter"/>
</dbReference>
<dbReference type="CDD" id="cd00290">
    <property type="entry name" value="cytochrome_b_C"/>
    <property type="match status" value="1"/>
</dbReference>
<dbReference type="CDD" id="cd00284">
    <property type="entry name" value="Cytochrome_b_N"/>
    <property type="match status" value="1"/>
</dbReference>
<dbReference type="FunFam" id="1.20.810.10:FF:000002">
    <property type="entry name" value="Cytochrome b"/>
    <property type="match status" value="1"/>
</dbReference>
<dbReference type="Gene3D" id="1.20.810.10">
    <property type="entry name" value="Cytochrome Bc1 Complex, Chain C"/>
    <property type="match status" value="1"/>
</dbReference>
<dbReference type="InterPro" id="IPR005798">
    <property type="entry name" value="Cyt_b/b6_C"/>
</dbReference>
<dbReference type="InterPro" id="IPR036150">
    <property type="entry name" value="Cyt_b/b6_C_sf"/>
</dbReference>
<dbReference type="InterPro" id="IPR005797">
    <property type="entry name" value="Cyt_b/b6_N"/>
</dbReference>
<dbReference type="InterPro" id="IPR027387">
    <property type="entry name" value="Cytb/b6-like_sf"/>
</dbReference>
<dbReference type="InterPro" id="IPR030689">
    <property type="entry name" value="Cytochrome_b"/>
</dbReference>
<dbReference type="InterPro" id="IPR048260">
    <property type="entry name" value="Cytochrome_b_C_euk/bac"/>
</dbReference>
<dbReference type="InterPro" id="IPR048259">
    <property type="entry name" value="Cytochrome_b_N_euk/bac"/>
</dbReference>
<dbReference type="InterPro" id="IPR016174">
    <property type="entry name" value="Di-haem_cyt_TM"/>
</dbReference>
<dbReference type="PANTHER" id="PTHR19271">
    <property type="entry name" value="CYTOCHROME B"/>
    <property type="match status" value="1"/>
</dbReference>
<dbReference type="PANTHER" id="PTHR19271:SF16">
    <property type="entry name" value="CYTOCHROME B"/>
    <property type="match status" value="1"/>
</dbReference>
<dbReference type="Pfam" id="PF00032">
    <property type="entry name" value="Cytochrom_B_C"/>
    <property type="match status" value="1"/>
</dbReference>
<dbReference type="Pfam" id="PF00033">
    <property type="entry name" value="Cytochrome_B"/>
    <property type="match status" value="1"/>
</dbReference>
<dbReference type="PIRSF" id="PIRSF038885">
    <property type="entry name" value="COB"/>
    <property type="match status" value="1"/>
</dbReference>
<dbReference type="SUPFAM" id="SSF81648">
    <property type="entry name" value="a domain/subunit of cytochrome bc1 complex (Ubiquinol-cytochrome c reductase)"/>
    <property type="match status" value="1"/>
</dbReference>
<dbReference type="SUPFAM" id="SSF81342">
    <property type="entry name" value="Transmembrane di-heme cytochromes"/>
    <property type="match status" value="1"/>
</dbReference>
<dbReference type="PROSITE" id="PS51003">
    <property type="entry name" value="CYTB_CTER"/>
    <property type="match status" value="1"/>
</dbReference>
<dbReference type="PROSITE" id="PS51002">
    <property type="entry name" value="CYTB_NTER"/>
    <property type="match status" value="1"/>
</dbReference>
<evidence type="ECO:0000250" key="1"/>
<evidence type="ECO:0000250" key="2">
    <source>
        <dbReference type="UniProtKB" id="P00157"/>
    </source>
</evidence>
<evidence type="ECO:0000255" key="3">
    <source>
        <dbReference type="PROSITE-ProRule" id="PRU00967"/>
    </source>
</evidence>
<evidence type="ECO:0000255" key="4">
    <source>
        <dbReference type="PROSITE-ProRule" id="PRU00968"/>
    </source>
</evidence>